<name>TMN2_ARATH</name>
<feature type="signal peptide" evidence="3">
    <location>
        <begin position="1"/>
        <end position="24"/>
    </location>
</feature>
<feature type="chain" id="PRO_0000431259" description="Transmembrane 9 superfamily member 2" evidence="3">
    <location>
        <begin position="25"/>
        <end position="592"/>
    </location>
</feature>
<feature type="topological domain" description="Lumenal" evidence="6">
    <location>
        <begin position="25"/>
        <end position="229"/>
    </location>
</feature>
<feature type="transmembrane region" description="Helical; Name=1" evidence="3">
    <location>
        <begin position="230"/>
        <end position="250"/>
    </location>
</feature>
<feature type="topological domain" description="Cytoplasmic" evidence="6">
    <location>
        <begin position="251"/>
        <end position="302"/>
    </location>
</feature>
<feature type="transmembrane region" description="Helical; Name=2" evidence="3">
    <location>
        <begin position="303"/>
        <end position="323"/>
    </location>
</feature>
<feature type="topological domain" description="Lumenal" evidence="6">
    <location>
        <position position="324"/>
    </location>
</feature>
<feature type="transmembrane region" description="Helical; Name=3" evidence="3">
    <location>
        <begin position="325"/>
        <end position="345"/>
    </location>
</feature>
<feature type="topological domain" description="Cytoplasmic" evidence="6">
    <location>
        <begin position="346"/>
        <end position="362"/>
    </location>
</feature>
<feature type="transmembrane region" description="Helical; Name=4" evidence="3">
    <location>
        <begin position="363"/>
        <end position="383"/>
    </location>
</feature>
<feature type="topological domain" description="Lumenal" evidence="6">
    <location>
        <begin position="384"/>
        <end position="397"/>
    </location>
</feature>
<feature type="transmembrane region" description="Helical; Name=5" evidence="3">
    <location>
        <begin position="398"/>
        <end position="418"/>
    </location>
</feature>
<feature type="topological domain" description="Cytoplasmic" evidence="6">
    <location>
        <begin position="419"/>
        <end position="452"/>
    </location>
</feature>
<feature type="transmembrane region" description="Helical; Name=6" evidence="3">
    <location>
        <begin position="453"/>
        <end position="473"/>
    </location>
</feature>
<feature type="topological domain" description="Lumenal" evidence="6">
    <location>
        <begin position="474"/>
        <end position="485"/>
    </location>
</feature>
<feature type="transmembrane region" description="Helical; Name=7" evidence="3">
    <location>
        <begin position="486"/>
        <end position="506"/>
    </location>
</feature>
<feature type="topological domain" description="Cytoplasmic" evidence="6">
    <location>
        <begin position="507"/>
        <end position="521"/>
    </location>
</feature>
<feature type="transmembrane region" description="Helical; Name=8" evidence="3">
    <location>
        <begin position="522"/>
        <end position="542"/>
    </location>
</feature>
<feature type="topological domain" description="Lumenal" evidence="6">
    <location>
        <begin position="543"/>
        <end position="553"/>
    </location>
</feature>
<feature type="transmembrane region" description="Helical; Name=9" evidence="3">
    <location>
        <begin position="554"/>
        <end position="574"/>
    </location>
</feature>
<feature type="topological domain" description="Cytoplasmic" evidence="6">
    <location>
        <begin position="575"/>
        <end position="592"/>
    </location>
</feature>
<feature type="short sequence motif" description="Endoplasmic reticulum export signal" evidence="2">
    <location>
        <begin position="581"/>
        <end position="586"/>
    </location>
</feature>
<feature type="short sequence motif" description="Golgi retention signal" evidence="2">
    <location>
        <begin position="590"/>
        <end position="592"/>
    </location>
</feature>
<dbReference type="EMBL" id="AC006917">
    <property type="protein sequence ID" value="AAF79216.1"/>
    <property type="status" value="ALT_SEQ"/>
    <property type="molecule type" value="Genomic_DNA"/>
</dbReference>
<dbReference type="EMBL" id="AC006917">
    <property type="protein sequence ID" value="AAF79217.1"/>
    <property type="status" value="ALT_SEQ"/>
    <property type="molecule type" value="Genomic_DNA"/>
</dbReference>
<dbReference type="EMBL" id="AC010657">
    <property type="protein sequence ID" value="AAF63170.1"/>
    <property type="status" value="ALT_SEQ"/>
    <property type="molecule type" value="Genomic_DNA"/>
</dbReference>
<dbReference type="EMBL" id="CP002684">
    <property type="protein sequence ID" value="AEE29200.1"/>
    <property type="molecule type" value="Genomic_DNA"/>
</dbReference>
<dbReference type="EMBL" id="AY053419">
    <property type="protein sequence ID" value="AAK96649.1"/>
    <property type="molecule type" value="mRNA"/>
</dbReference>
<dbReference type="EMBL" id="AY093961">
    <property type="protein sequence ID" value="AAM16222.1"/>
    <property type="molecule type" value="mRNA"/>
</dbReference>
<dbReference type="PIR" id="H86280">
    <property type="entry name" value="H86280"/>
</dbReference>
<dbReference type="RefSeq" id="NP_172919.1">
    <property type="nucleotide sequence ID" value="NM_101334.3"/>
</dbReference>
<dbReference type="BioGRID" id="23269">
    <property type="interactions" value="23"/>
</dbReference>
<dbReference type="FunCoup" id="Q940S0">
    <property type="interactions" value="3697"/>
</dbReference>
<dbReference type="IntAct" id="Q940S0">
    <property type="interactions" value="25"/>
</dbReference>
<dbReference type="STRING" id="3702.Q940S0"/>
<dbReference type="PaxDb" id="3702-AT1G14670.1"/>
<dbReference type="ProMEX" id="Q940S0"/>
<dbReference type="ProteomicsDB" id="234450"/>
<dbReference type="EnsemblPlants" id="AT1G14670.1">
    <property type="protein sequence ID" value="AT1G14670.1"/>
    <property type="gene ID" value="AT1G14670"/>
</dbReference>
<dbReference type="GeneID" id="838029"/>
<dbReference type="Gramene" id="AT1G14670.1">
    <property type="protein sequence ID" value="AT1G14670.1"/>
    <property type="gene ID" value="AT1G14670"/>
</dbReference>
<dbReference type="KEGG" id="ath:AT1G14670"/>
<dbReference type="Araport" id="AT1G14670"/>
<dbReference type="TAIR" id="AT1G14670"/>
<dbReference type="eggNOG" id="KOG1277">
    <property type="taxonomic scope" value="Eukaryota"/>
</dbReference>
<dbReference type="HOGENOM" id="CLU_010714_0_2_1"/>
<dbReference type="InParanoid" id="Q940S0"/>
<dbReference type="OMA" id="FCSAGDV"/>
<dbReference type="OrthoDB" id="1666796at2759"/>
<dbReference type="PhylomeDB" id="Q940S0"/>
<dbReference type="CD-CODE" id="4299E36E">
    <property type="entry name" value="Nucleolus"/>
</dbReference>
<dbReference type="PRO" id="PR:Q940S0"/>
<dbReference type="Proteomes" id="UP000006548">
    <property type="component" value="Chromosome 1"/>
</dbReference>
<dbReference type="ExpressionAtlas" id="Q940S0">
    <property type="expression patterns" value="baseline and differential"/>
</dbReference>
<dbReference type="GO" id="GO:0005768">
    <property type="term" value="C:endosome"/>
    <property type="evidence" value="ECO:0007005"/>
    <property type="project" value="TAIR"/>
</dbReference>
<dbReference type="GO" id="GO:0010008">
    <property type="term" value="C:endosome membrane"/>
    <property type="evidence" value="ECO:0007669"/>
    <property type="project" value="UniProtKB-SubCell"/>
</dbReference>
<dbReference type="GO" id="GO:0005576">
    <property type="term" value="C:extracellular region"/>
    <property type="evidence" value="ECO:0007005"/>
    <property type="project" value="TAIR"/>
</dbReference>
<dbReference type="GO" id="GO:0005794">
    <property type="term" value="C:Golgi apparatus"/>
    <property type="evidence" value="ECO:0007005"/>
    <property type="project" value="TAIR"/>
</dbReference>
<dbReference type="GO" id="GO:0000139">
    <property type="term" value="C:Golgi membrane"/>
    <property type="evidence" value="ECO:0007669"/>
    <property type="project" value="UniProtKB-SubCell"/>
</dbReference>
<dbReference type="GO" id="GO:0000138">
    <property type="term" value="C:Golgi trans cisterna"/>
    <property type="evidence" value="ECO:0007005"/>
    <property type="project" value="TAIR"/>
</dbReference>
<dbReference type="GO" id="GO:0005802">
    <property type="term" value="C:trans-Golgi network"/>
    <property type="evidence" value="ECO:0007005"/>
    <property type="project" value="TAIR"/>
</dbReference>
<dbReference type="InterPro" id="IPR004240">
    <property type="entry name" value="EMP70"/>
</dbReference>
<dbReference type="InterPro" id="IPR036259">
    <property type="entry name" value="MFS_trans_sf"/>
</dbReference>
<dbReference type="PANTHER" id="PTHR10766:SF14">
    <property type="entry name" value="TRANSMEMBRANE 9 SUPERFAMILY MEMBER 2"/>
    <property type="match status" value="1"/>
</dbReference>
<dbReference type="PANTHER" id="PTHR10766">
    <property type="entry name" value="TRANSMEMBRANE 9 SUPERFAMILY PROTEIN"/>
    <property type="match status" value="1"/>
</dbReference>
<dbReference type="Pfam" id="PF02990">
    <property type="entry name" value="EMP70"/>
    <property type="match status" value="1"/>
</dbReference>
<dbReference type="SUPFAM" id="SSF103473">
    <property type="entry name" value="MFS general substrate transporter"/>
    <property type="match status" value="1"/>
</dbReference>
<accession>Q940S0</accession>
<accession>Q9LQW5</accession>
<accession>Q9LQW6</accession>
<accession>Q9MA18</accession>
<proteinExistence type="evidence at transcript level"/>
<comment type="subcellular location">
    <subcellularLocation>
        <location evidence="1">Endosome membrane</location>
        <topology evidence="3">Multi-pass membrane protein</topology>
    </subcellularLocation>
    <subcellularLocation>
        <location evidence="2">Golgi apparatus membrane</location>
        <topology evidence="3">Multi-pass membrane protein</topology>
    </subcellularLocation>
</comment>
<comment type="domain">
    <text evidence="2">The C-terminal KXD/E motif functions as a Golgi retention signal, certainly through the binding to the COP1 coatomer.</text>
</comment>
<comment type="similarity">
    <text>Belongs to the nonaspanin (TM9SF) (TC 9.A.2) family.</text>
</comment>
<comment type="sequence caution" evidence="6">
    <conflict type="erroneous gene model prediction">
        <sequence resource="EMBL-CDS" id="AAF63170"/>
    </conflict>
</comment>
<comment type="sequence caution" evidence="6">
    <conflict type="erroneous gene model prediction">
        <sequence resource="EMBL-CDS" id="AAF79216"/>
    </conflict>
    <text>Was originally thought to correspond to two different genes.</text>
</comment>
<comment type="sequence caution" evidence="6">
    <conflict type="erroneous gene model prediction">
        <sequence resource="EMBL-CDS" id="AAF79217"/>
    </conflict>
    <text>Was originally thought to correspond to two different genes.</text>
</comment>
<organism>
    <name type="scientific">Arabidopsis thaliana</name>
    <name type="common">Mouse-ear cress</name>
    <dbReference type="NCBI Taxonomy" id="3702"/>
    <lineage>
        <taxon>Eukaryota</taxon>
        <taxon>Viridiplantae</taxon>
        <taxon>Streptophyta</taxon>
        <taxon>Embryophyta</taxon>
        <taxon>Tracheophyta</taxon>
        <taxon>Spermatophyta</taxon>
        <taxon>Magnoliopsida</taxon>
        <taxon>eudicotyledons</taxon>
        <taxon>Gunneridae</taxon>
        <taxon>Pentapetalae</taxon>
        <taxon>rosids</taxon>
        <taxon>malvids</taxon>
        <taxon>Brassicales</taxon>
        <taxon>Brassicaceae</taxon>
        <taxon>Camelineae</taxon>
        <taxon>Arabidopsis</taxon>
    </lineage>
</organism>
<protein>
    <recommendedName>
        <fullName evidence="6">Transmembrane 9 superfamily member 2</fullName>
    </recommendedName>
    <alternativeName>
        <fullName evidence="5">Endomembrane protein 8</fullName>
    </alternativeName>
    <alternativeName>
        <fullName evidence="4">Transmembrane nine protein 2</fullName>
        <shortName evidence="4">AtTMN2</shortName>
    </alternativeName>
</protein>
<reference key="1">
    <citation type="journal article" date="2000" name="Nature">
        <title>Sequence and analysis of chromosome 1 of the plant Arabidopsis thaliana.</title>
        <authorList>
            <person name="Theologis A."/>
            <person name="Ecker J.R."/>
            <person name="Palm C.J."/>
            <person name="Federspiel N.A."/>
            <person name="Kaul S."/>
            <person name="White O."/>
            <person name="Alonso J."/>
            <person name="Altafi H."/>
            <person name="Araujo R."/>
            <person name="Bowman C.L."/>
            <person name="Brooks S.Y."/>
            <person name="Buehler E."/>
            <person name="Chan A."/>
            <person name="Chao Q."/>
            <person name="Chen H."/>
            <person name="Cheuk R.F."/>
            <person name="Chin C.W."/>
            <person name="Chung M.K."/>
            <person name="Conn L."/>
            <person name="Conway A.B."/>
            <person name="Conway A.R."/>
            <person name="Creasy T.H."/>
            <person name="Dewar K."/>
            <person name="Dunn P."/>
            <person name="Etgu P."/>
            <person name="Feldblyum T.V."/>
            <person name="Feng J.-D."/>
            <person name="Fong B."/>
            <person name="Fujii C.Y."/>
            <person name="Gill J.E."/>
            <person name="Goldsmith A.D."/>
            <person name="Haas B."/>
            <person name="Hansen N.F."/>
            <person name="Hughes B."/>
            <person name="Huizar L."/>
            <person name="Hunter J.L."/>
            <person name="Jenkins J."/>
            <person name="Johnson-Hopson C."/>
            <person name="Khan S."/>
            <person name="Khaykin E."/>
            <person name="Kim C.J."/>
            <person name="Koo H.L."/>
            <person name="Kremenetskaia I."/>
            <person name="Kurtz D.B."/>
            <person name="Kwan A."/>
            <person name="Lam B."/>
            <person name="Langin-Hooper S."/>
            <person name="Lee A."/>
            <person name="Lee J.M."/>
            <person name="Lenz C.A."/>
            <person name="Li J.H."/>
            <person name="Li Y.-P."/>
            <person name="Lin X."/>
            <person name="Liu S.X."/>
            <person name="Liu Z.A."/>
            <person name="Luros J.S."/>
            <person name="Maiti R."/>
            <person name="Marziali A."/>
            <person name="Militscher J."/>
            <person name="Miranda M."/>
            <person name="Nguyen M."/>
            <person name="Nierman W.C."/>
            <person name="Osborne B.I."/>
            <person name="Pai G."/>
            <person name="Peterson J."/>
            <person name="Pham P.K."/>
            <person name="Rizzo M."/>
            <person name="Rooney T."/>
            <person name="Rowley D."/>
            <person name="Sakano H."/>
            <person name="Salzberg S.L."/>
            <person name="Schwartz J.R."/>
            <person name="Shinn P."/>
            <person name="Southwick A.M."/>
            <person name="Sun H."/>
            <person name="Tallon L.J."/>
            <person name="Tambunga G."/>
            <person name="Toriumi M.J."/>
            <person name="Town C.D."/>
            <person name="Utterback T."/>
            <person name="Van Aken S."/>
            <person name="Vaysberg M."/>
            <person name="Vysotskaia V.S."/>
            <person name="Walker M."/>
            <person name="Wu D."/>
            <person name="Yu G."/>
            <person name="Fraser C.M."/>
            <person name="Venter J.C."/>
            <person name="Davis R.W."/>
        </authorList>
    </citation>
    <scope>NUCLEOTIDE SEQUENCE [LARGE SCALE GENOMIC DNA]</scope>
    <source>
        <strain>cv. Columbia</strain>
    </source>
</reference>
<reference key="2">
    <citation type="journal article" date="2017" name="Plant J.">
        <title>Araport11: a complete reannotation of the Arabidopsis thaliana reference genome.</title>
        <authorList>
            <person name="Cheng C.Y."/>
            <person name="Krishnakumar V."/>
            <person name="Chan A.P."/>
            <person name="Thibaud-Nissen F."/>
            <person name="Schobel S."/>
            <person name="Town C.D."/>
        </authorList>
    </citation>
    <scope>GENOME REANNOTATION</scope>
    <source>
        <strain>cv. Columbia</strain>
    </source>
</reference>
<reference key="3">
    <citation type="journal article" date="2003" name="Science">
        <title>Empirical analysis of transcriptional activity in the Arabidopsis genome.</title>
        <authorList>
            <person name="Yamada K."/>
            <person name="Lim J."/>
            <person name="Dale J.M."/>
            <person name="Chen H."/>
            <person name="Shinn P."/>
            <person name="Palm C.J."/>
            <person name="Southwick A.M."/>
            <person name="Wu H.C."/>
            <person name="Kim C.J."/>
            <person name="Nguyen M."/>
            <person name="Pham P.K."/>
            <person name="Cheuk R.F."/>
            <person name="Karlin-Newmann G."/>
            <person name="Liu S.X."/>
            <person name="Lam B."/>
            <person name="Sakano H."/>
            <person name="Wu T."/>
            <person name="Yu G."/>
            <person name="Miranda M."/>
            <person name="Quach H.L."/>
            <person name="Tripp M."/>
            <person name="Chang C.H."/>
            <person name="Lee J.M."/>
            <person name="Toriumi M.J."/>
            <person name="Chan M.M."/>
            <person name="Tang C.C."/>
            <person name="Onodera C.S."/>
            <person name="Deng J.M."/>
            <person name="Akiyama K."/>
            <person name="Ansari Y."/>
            <person name="Arakawa T."/>
            <person name="Banh J."/>
            <person name="Banno F."/>
            <person name="Bowser L."/>
            <person name="Brooks S.Y."/>
            <person name="Carninci P."/>
            <person name="Chao Q."/>
            <person name="Choy N."/>
            <person name="Enju A."/>
            <person name="Goldsmith A.D."/>
            <person name="Gurjal M."/>
            <person name="Hansen N.F."/>
            <person name="Hayashizaki Y."/>
            <person name="Johnson-Hopson C."/>
            <person name="Hsuan V.W."/>
            <person name="Iida K."/>
            <person name="Karnes M."/>
            <person name="Khan S."/>
            <person name="Koesema E."/>
            <person name="Ishida J."/>
            <person name="Jiang P.X."/>
            <person name="Jones T."/>
            <person name="Kawai J."/>
            <person name="Kamiya A."/>
            <person name="Meyers C."/>
            <person name="Nakajima M."/>
            <person name="Narusaka M."/>
            <person name="Seki M."/>
            <person name="Sakurai T."/>
            <person name="Satou M."/>
            <person name="Tamse R."/>
            <person name="Vaysberg M."/>
            <person name="Wallender E.K."/>
            <person name="Wong C."/>
            <person name="Yamamura Y."/>
            <person name="Yuan S."/>
            <person name="Shinozaki K."/>
            <person name="Davis R.W."/>
            <person name="Theologis A."/>
            <person name="Ecker J.R."/>
        </authorList>
    </citation>
    <scope>NUCLEOTIDE SEQUENCE [LARGE SCALE MRNA]</scope>
    <source>
        <strain>cv. Columbia</strain>
    </source>
</reference>
<reference key="4">
    <citation type="journal article" date="2010" name="Physiol. Plantarum">
        <title>Transmembrane nine proteins in yeast and Arabidopsis affect cellular metal contents without changing vacuolar morphology.</title>
        <authorList>
            <person name="Hegelund J.N."/>
            <person name="Jahn T.P."/>
            <person name="Baekgaard L."/>
            <person name="Palmgren M.G."/>
            <person name="Schjoerring J.K."/>
        </authorList>
    </citation>
    <scope>GENE FAMILY</scope>
    <scope>NOMENCLATURE</scope>
</reference>
<reference key="5">
    <citation type="journal article" date="2012" name="Plant Cell">
        <title>The Golgi-localized Arabidopsis endomembrane protein12 contains both endoplasmic reticulum export and Golgi retention signals at its C terminus.</title>
        <authorList>
            <person name="Gao C."/>
            <person name="Yu C.K."/>
            <person name="Qu S."/>
            <person name="San M.W."/>
            <person name="Li K.Y."/>
            <person name="Lo S.W."/>
            <person name="Jiang L."/>
        </authorList>
    </citation>
    <scope>GENE FAMILY</scope>
    <scope>NOMENCLATURE</scope>
</reference>
<keyword id="KW-0967">Endosome</keyword>
<keyword id="KW-0333">Golgi apparatus</keyword>
<keyword id="KW-0472">Membrane</keyword>
<keyword id="KW-1185">Reference proteome</keyword>
<keyword id="KW-0732">Signal</keyword>
<keyword id="KW-0812">Transmembrane</keyword>
<keyword id="KW-1133">Transmembrane helix</keyword>
<gene>
    <name evidence="4" type="primary">TMN2</name>
    <name evidence="5" type="synonym">EMP8</name>
    <name evidence="7" type="ordered locus">At1g14670</name>
    <name evidence="9 10" type="ORF">F10B6.2/F10B6.3</name>
    <name evidence="8" type="ORF">T5E21.15</name>
</gene>
<sequence>MRTPTTILLLVGAILFSGAGYVRSDASDHRYKEGDTVPLYANKVGPFHNPSETYRYFDLPFCIPEGVKEKKEALGEVLNGDRLVSAPYKLNFRDEKESEVYCNKKLSKEEVKQFRKAVEKDYYFQMYYDDLPIWGFIGKVDKDIKSDPSEFKYFLYKHIQFEILYNKDRVIEISARMDPHSLVDLTEDKEVDAEFMYTVKWKETETPFEKRMEKYSMSSSLPHHLEIHWFSIINSCVTVLLLTGFLATILMRVLKNDFMKYAQDEEAADDQEETGWKYIHGDVFRFPTHNSLFAASLGSGTQLFTLTIFIFMLALVGVFYPYNRGALFTALVVIYALTSGIAGYTSASFYCQLEGKSWVRNLLLTGCLFCGPLFLTFCFLNTVAITYTATAALPFGTIVVIVLIWTLVTSPLLVLGGIAGKNSKAEFQAPCRTTKYPREIPPLPWYRSAIPQMAMAGFLPFSAIYIELYYIFASVWGHRIYTIYSILFIVFIILIIVTAFITVALTYFQLAAEDHQWWWRSFLCGGSTGLFIYAYCLYYYYARSDMSGFMQTSFFFGYMACICYGFFLMLGTVGFRAALLFVRHIYRSIKCE</sequence>
<evidence type="ECO:0000250" key="1">
    <source>
        <dbReference type="UniProtKB" id="P32802"/>
    </source>
</evidence>
<evidence type="ECO:0000250" key="2">
    <source>
        <dbReference type="UniProtKB" id="Q940G0"/>
    </source>
</evidence>
<evidence type="ECO:0000255" key="3"/>
<evidence type="ECO:0000303" key="4">
    <source>
    </source>
</evidence>
<evidence type="ECO:0000303" key="5">
    <source>
    </source>
</evidence>
<evidence type="ECO:0000305" key="6"/>
<evidence type="ECO:0000312" key="7">
    <source>
        <dbReference type="Araport" id="AT1G14670"/>
    </source>
</evidence>
<evidence type="ECO:0000312" key="8">
    <source>
        <dbReference type="EMBL" id="AAF63170.1"/>
    </source>
</evidence>
<evidence type="ECO:0000312" key="9">
    <source>
        <dbReference type="EMBL" id="AAF79216.1"/>
    </source>
</evidence>
<evidence type="ECO:0000312" key="10">
    <source>
        <dbReference type="EMBL" id="AAF79217.1"/>
    </source>
</evidence>